<protein>
    <recommendedName>
        <fullName evidence="1">tRNA N6-adenosine threonylcarbamoyltransferase</fullName>
        <ecNumber evidence="1">2.3.1.234</ecNumber>
    </recommendedName>
    <alternativeName>
        <fullName evidence="1">N6-L-threonylcarbamoyladenine synthase</fullName>
        <shortName evidence="1">t(6)A synthase</shortName>
    </alternativeName>
    <alternativeName>
        <fullName evidence="1">t(6)A37 threonylcarbamoyladenosine biosynthesis protein TsaD</fullName>
    </alternativeName>
    <alternativeName>
        <fullName evidence="1">tRNA threonylcarbamoyladenosine biosynthesis protein TsaD</fullName>
    </alternativeName>
</protein>
<dbReference type="EC" id="2.3.1.234" evidence="1"/>
<dbReference type="EMBL" id="CP000921">
    <property type="protein sequence ID" value="ACO22642.1"/>
    <property type="molecule type" value="Genomic_DNA"/>
</dbReference>
<dbReference type="RefSeq" id="WP_000655068.1">
    <property type="nucleotide sequence ID" value="NC_012469.1"/>
</dbReference>
<dbReference type="SMR" id="C1CP14"/>
<dbReference type="KEGG" id="snt:SPT_0176"/>
<dbReference type="HOGENOM" id="CLU_023208_0_1_9"/>
<dbReference type="GO" id="GO:0005737">
    <property type="term" value="C:cytoplasm"/>
    <property type="evidence" value="ECO:0007669"/>
    <property type="project" value="UniProtKB-SubCell"/>
</dbReference>
<dbReference type="GO" id="GO:0005506">
    <property type="term" value="F:iron ion binding"/>
    <property type="evidence" value="ECO:0007669"/>
    <property type="project" value="UniProtKB-UniRule"/>
</dbReference>
<dbReference type="GO" id="GO:0061711">
    <property type="term" value="F:N(6)-L-threonylcarbamoyladenine synthase activity"/>
    <property type="evidence" value="ECO:0007669"/>
    <property type="project" value="UniProtKB-EC"/>
</dbReference>
<dbReference type="GO" id="GO:0002949">
    <property type="term" value="P:tRNA threonylcarbamoyladenosine modification"/>
    <property type="evidence" value="ECO:0007669"/>
    <property type="project" value="UniProtKB-UniRule"/>
</dbReference>
<dbReference type="CDD" id="cd24133">
    <property type="entry name" value="ASKHA_NBD_TsaD_bac"/>
    <property type="match status" value="1"/>
</dbReference>
<dbReference type="FunFam" id="3.30.420.40:FF:000012">
    <property type="entry name" value="tRNA N6-adenosine threonylcarbamoyltransferase"/>
    <property type="match status" value="1"/>
</dbReference>
<dbReference type="FunFam" id="3.30.420.40:FF:000040">
    <property type="entry name" value="tRNA N6-adenosine threonylcarbamoyltransferase"/>
    <property type="match status" value="1"/>
</dbReference>
<dbReference type="Gene3D" id="3.30.420.40">
    <property type="match status" value="2"/>
</dbReference>
<dbReference type="HAMAP" id="MF_01445">
    <property type="entry name" value="TsaD"/>
    <property type="match status" value="1"/>
</dbReference>
<dbReference type="InterPro" id="IPR043129">
    <property type="entry name" value="ATPase_NBD"/>
</dbReference>
<dbReference type="InterPro" id="IPR000905">
    <property type="entry name" value="Gcp-like_dom"/>
</dbReference>
<dbReference type="InterPro" id="IPR017861">
    <property type="entry name" value="KAE1/TsaD"/>
</dbReference>
<dbReference type="InterPro" id="IPR017860">
    <property type="entry name" value="Peptidase_M22_CS"/>
</dbReference>
<dbReference type="InterPro" id="IPR022450">
    <property type="entry name" value="TsaD"/>
</dbReference>
<dbReference type="NCBIfam" id="TIGR00329">
    <property type="entry name" value="gcp_kae1"/>
    <property type="match status" value="1"/>
</dbReference>
<dbReference type="NCBIfam" id="TIGR03723">
    <property type="entry name" value="T6A_TsaD_YgjD"/>
    <property type="match status" value="1"/>
</dbReference>
<dbReference type="PANTHER" id="PTHR11735">
    <property type="entry name" value="TRNA N6-ADENOSINE THREONYLCARBAMOYLTRANSFERASE"/>
    <property type="match status" value="1"/>
</dbReference>
<dbReference type="PANTHER" id="PTHR11735:SF6">
    <property type="entry name" value="TRNA N6-ADENOSINE THREONYLCARBAMOYLTRANSFERASE, MITOCHONDRIAL"/>
    <property type="match status" value="1"/>
</dbReference>
<dbReference type="Pfam" id="PF00814">
    <property type="entry name" value="TsaD"/>
    <property type="match status" value="1"/>
</dbReference>
<dbReference type="PRINTS" id="PR00789">
    <property type="entry name" value="OSIALOPTASE"/>
</dbReference>
<dbReference type="SUPFAM" id="SSF53067">
    <property type="entry name" value="Actin-like ATPase domain"/>
    <property type="match status" value="1"/>
</dbReference>
<dbReference type="PROSITE" id="PS01016">
    <property type="entry name" value="GLYCOPROTEASE"/>
    <property type="match status" value="1"/>
</dbReference>
<gene>
    <name evidence="1" type="primary">tsaD</name>
    <name type="synonym">gcp</name>
    <name type="ordered locus">SPT_0176</name>
</gene>
<name>TSAD_STRZT</name>
<feature type="chain" id="PRO_1000184987" description="tRNA N6-adenosine threonylcarbamoyltransferase">
    <location>
        <begin position="1"/>
        <end position="336"/>
    </location>
</feature>
<feature type="binding site" evidence="1">
    <location>
        <position position="114"/>
    </location>
    <ligand>
        <name>Fe cation</name>
        <dbReference type="ChEBI" id="CHEBI:24875"/>
    </ligand>
</feature>
<feature type="binding site" evidence="1">
    <location>
        <position position="118"/>
    </location>
    <ligand>
        <name>Fe cation</name>
        <dbReference type="ChEBI" id="CHEBI:24875"/>
    </ligand>
</feature>
<feature type="binding site" evidence="1">
    <location>
        <begin position="136"/>
        <end position="140"/>
    </location>
    <ligand>
        <name>substrate</name>
    </ligand>
</feature>
<feature type="binding site" evidence="1">
    <location>
        <position position="169"/>
    </location>
    <ligand>
        <name>substrate</name>
    </ligand>
</feature>
<feature type="binding site" evidence="1">
    <location>
        <position position="182"/>
    </location>
    <ligand>
        <name>substrate</name>
    </ligand>
</feature>
<feature type="binding site" evidence="1">
    <location>
        <position position="186"/>
    </location>
    <ligand>
        <name>substrate</name>
    </ligand>
</feature>
<feature type="binding site" evidence="1">
    <location>
        <position position="275"/>
    </location>
    <ligand>
        <name>substrate</name>
    </ligand>
</feature>
<feature type="binding site" evidence="1">
    <location>
        <position position="301"/>
    </location>
    <ligand>
        <name>Fe cation</name>
        <dbReference type="ChEBI" id="CHEBI:24875"/>
    </ligand>
</feature>
<accession>C1CP14</accession>
<organism>
    <name type="scientific">Streptococcus pneumoniae (strain Taiwan19F-14)</name>
    <dbReference type="NCBI Taxonomy" id="487213"/>
    <lineage>
        <taxon>Bacteria</taxon>
        <taxon>Bacillati</taxon>
        <taxon>Bacillota</taxon>
        <taxon>Bacilli</taxon>
        <taxon>Lactobacillales</taxon>
        <taxon>Streptococcaceae</taxon>
        <taxon>Streptococcus</taxon>
    </lineage>
</organism>
<proteinExistence type="inferred from homology"/>
<keyword id="KW-0012">Acyltransferase</keyword>
<keyword id="KW-0963">Cytoplasm</keyword>
<keyword id="KW-0408">Iron</keyword>
<keyword id="KW-0479">Metal-binding</keyword>
<keyword id="KW-0808">Transferase</keyword>
<keyword id="KW-0819">tRNA processing</keyword>
<sequence length="336" mass="36229">MKDRYILAFETSCDETSVAVLKNDDELLSNVIASQIESHKRFGGVVPEVASRHHVEVITACIEEALAEAGITEEDVTAVAVTYGPGLVGALLVGLSAAKTFAWAHGLPLIPVNHMAGHLMAAQSVEPLEFPLLALLVSGGHTELVYVSEAGDYKIVGETRDDAVGEAYDKVGRVMGLTYPAGREIDELAHQGQDIYDFPRAMIKEDNLEFSFSGLKSAFINLYHNAEQKGESLSTEDLCASFQAAVMDILMAKTKKALEKYPVKTLVVAGGVAANKGLRERLAAEITDVKVIIPPLRLCGDNAGMIAYASVSEWNKENFAGWDLNAKPSLAFDTME</sequence>
<evidence type="ECO:0000255" key="1">
    <source>
        <dbReference type="HAMAP-Rule" id="MF_01445"/>
    </source>
</evidence>
<comment type="function">
    <text evidence="1">Required for the formation of a threonylcarbamoyl group on adenosine at position 37 (t(6)A37) in tRNAs that read codons beginning with adenine. Is involved in the transfer of the threonylcarbamoyl moiety of threonylcarbamoyl-AMP (TC-AMP) to the N6 group of A37, together with TsaE and TsaB. TsaD likely plays a direct catalytic role in this reaction.</text>
</comment>
<comment type="catalytic activity">
    <reaction evidence="1">
        <text>L-threonylcarbamoyladenylate + adenosine(37) in tRNA = N(6)-L-threonylcarbamoyladenosine(37) in tRNA + AMP + H(+)</text>
        <dbReference type="Rhea" id="RHEA:37059"/>
        <dbReference type="Rhea" id="RHEA-COMP:10162"/>
        <dbReference type="Rhea" id="RHEA-COMP:10163"/>
        <dbReference type="ChEBI" id="CHEBI:15378"/>
        <dbReference type="ChEBI" id="CHEBI:73682"/>
        <dbReference type="ChEBI" id="CHEBI:74411"/>
        <dbReference type="ChEBI" id="CHEBI:74418"/>
        <dbReference type="ChEBI" id="CHEBI:456215"/>
        <dbReference type="EC" id="2.3.1.234"/>
    </reaction>
</comment>
<comment type="cofactor">
    <cofactor evidence="1">
        <name>Fe(2+)</name>
        <dbReference type="ChEBI" id="CHEBI:29033"/>
    </cofactor>
    <text evidence="1">Binds 1 Fe(2+) ion per subunit.</text>
</comment>
<comment type="subcellular location">
    <subcellularLocation>
        <location evidence="1">Cytoplasm</location>
    </subcellularLocation>
</comment>
<comment type="similarity">
    <text evidence="1">Belongs to the KAE1 / TsaD family.</text>
</comment>
<reference key="1">
    <citation type="journal article" date="2010" name="Genome Biol.">
        <title>Structure and dynamics of the pan-genome of Streptococcus pneumoniae and closely related species.</title>
        <authorList>
            <person name="Donati C."/>
            <person name="Hiller N.L."/>
            <person name="Tettelin H."/>
            <person name="Muzzi A."/>
            <person name="Croucher N.J."/>
            <person name="Angiuoli S.V."/>
            <person name="Oggioni M."/>
            <person name="Dunning Hotopp J.C."/>
            <person name="Hu F.Z."/>
            <person name="Riley D.R."/>
            <person name="Covacci A."/>
            <person name="Mitchell T.J."/>
            <person name="Bentley S.D."/>
            <person name="Kilian M."/>
            <person name="Ehrlich G.D."/>
            <person name="Rappuoli R."/>
            <person name="Moxon E.R."/>
            <person name="Masignani V."/>
        </authorList>
    </citation>
    <scope>NUCLEOTIDE SEQUENCE [LARGE SCALE GENOMIC DNA]</scope>
    <source>
        <strain>Taiwan19F-14</strain>
    </source>
</reference>